<feature type="chain" id="PRO_0000231219" description="UDP-N-acetylglucosamine 1-carboxyvinyltransferase 1">
    <location>
        <begin position="1"/>
        <end position="507"/>
    </location>
</feature>
<feature type="active site" description="Proton donor" evidence="1">
    <location>
        <position position="136"/>
    </location>
</feature>
<feature type="binding site" evidence="1">
    <location>
        <begin position="41"/>
        <end position="42"/>
    </location>
    <ligand>
        <name>phosphoenolpyruvate</name>
        <dbReference type="ChEBI" id="CHEBI:58702"/>
    </ligand>
</feature>
<feature type="binding site" evidence="1">
    <location>
        <position position="112"/>
    </location>
    <ligand>
        <name>UDP-N-acetyl-alpha-D-glucosamine</name>
        <dbReference type="ChEBI" id="CHEBI:57705"/>
    </ligand>
</feature>
<feature type="binding site" evidence="1">
    <location>
        <begin position="141"/>
        <end position="145"/>
    </location>
    <ligand>
        <name>UDP-N-acetyl-alpha-D-glucosamine</name>
        <dbReference type="ChEBI" id="CHEBI:57705"/>
    </ligand>
</feature>
<feature type="binding site" evidence="1">
    <location>
        <position position="328"/>
    </location>
    <ligand>
        <name>UDP-N-acetyl-alpha-D-glucosamine</name>
        <dbReference type="ChEBI" id="CHEBI:57705"/>
    </ligand>
</feature>
<feature type="binding site" evidence="1">
    <location>
        <position position="350"/>
    </location>
    <ligand>
        <name>UDP-N-acetyl-alpha-D-glucosamine</name>
        <dbReference type="ChEBI" id="CHEBI:57705"/>
    </ligand>
</feature>
<feature type="modified residue" description="2-(S-cysteinyl)pyruvic acid O-phosphothioketal" evidence="1">
    <location>
        <position position="136"/>
    </location>
</feature>
<evidence type="ECO:0000255" key="1">
    <source>
        <dbReference type="HAMAP-Rule" id="MF_00111"/>
    </source>
</evidence>
<proteinExistence type="inferred from homology"/>
<gene>
    <name evidence="1" type="primary">murA1</name>
    <name type="ordered locus">lpl0612</name>
</gene>
<sequence length="507" mass="54854">MLSKYELIKPDIGSSHGNITKVYEIVGGKPLRGQVKVSGSKNAALPVLAASLLCKEPLQLTNLPKILDVTNMIQCMEALGKRFEFINTNTIKIGNREMDTLTIPKEAARQIRASIILLGPLVAQYPKVILPLPGGCSIGKRPIDLHISALNALGVDIVELPDCLVCSRRYARLQGNTINFSIKTVTGTENAMMAAVLAEGTTIINNAAMEPEIVDLANFLNRLGAKINGGGSDRITISGVDKLNSCGSYSIMADRIEAGTYLVAAAMTRGSISVKGVNPDYLVAVLSELKCAGAKITCDSDSIQLDMGEEYGESLNITTKPYPGFPTDLQSLFLSLTCVLRGNSYLCETLFEDRFQIVQELKKMGANISLKDNTAHIKGVSRLRGSQVNATDLRSGAALVCASLAAEGITQIFAIEHIERGYEDLILKLKALGANIKLIENTHVTSTELSDSHFKEATSSETRIQRASLIETIVTPSITTFGQFKRVPTGEVTELEKQQTPYLHHIM</sequence>
<dbReference type="EC" id="2.5.1.7" evidence="1"/>
<dbReference type="EMBL" id="CR628337">
    <property type="protein sequence ID" value="CAH14845.1"/>
    <property type="molecule type" value="Genomic_DNA"/>
</dbReference>
<dbReference type="RefSeq" id="WP_011214799.1">
    <property type="nucleotide sequence ID" value="NC_006369.1"/>
</dbReference>
<dbReference type="SMR" id="Q5WYX3"/>
<dbReference type="KEGG" id="lpf:lpl0612"/>
<dbReference type="LegioList" id="lpl0612"/>
<dbReference type="HOGENOM" id="CLU_027387_0_0_6"/>
<dbReference type="UniPathway" id="UPA00219"/>
<dbReference type="Proteomes" id="UP000002517">
    <property type="component" value="Chromosome"/>
</dbReference>
<dbReference type="GO" id="GO:0005737">
    <property type="term" value="C:cytoplasm"/>
    <property type="evidence" value="ECO:0007669"/>
    <property type="project" value="UniProtKB-SubCell"/>
</dbReference>
<dbReference type="GO" id="GO:0008760">
    <property type="term" value="F:UDP-N-acetylglucosamine 1-carboxyvinyltransferase activity"/>
    <property type="evidence" value="ECO:0007669"/>
    <property type="project" value="UniProtKB-UniRule"/>
</dbReference>
<dbReference type="GO" id="GO:0051301">
    <property type="term" value="P:cell division"/>
    <property type="evidence" value="ECO:0007669"/>
    <property type="project" value="UniProtKB-KW"/>
</dbReference>
<dbReference type="GO" id="GO:0071555">
    <property type="term" value="P:cell wall organization"/>
    <property type="evidence" value="ECO:0007669"/>
    <property type="project" value="UniProtKB-KW"/>
</dbReference>
<dbReference type="GO" id="GO:0009252">
    <property type="term" value="P:peptidoglycan biosynthetic process"/>
    <property type="evidence" value="ECO:0007669"/>
    <property type="project" value="UniProtKB-UniRule"/>
</dbReference>
<dbReference type="GO" id="GO:0008360">
    <property type="term" value="P:regulation of cell shape"/>
    <property type="evidence" value="ECO:0007669"/>
    <property type="project" value="UniProtKB-KW"/>
</dbReference>
<dbReference type="GO" id="GO:0019277">
    <property type="term" value="P:UDP-N-acetylgalactosamine biosynthetic process"/>
    <property type="evidence" value="ECO:0007669"/>
    <property type="project" value="InterPro"/>
</dbReference>
<dbReference type="CDD" id="cd01555">
    <property type="entry name" value="UdpNAET"/>
    <property type="match status" value="1"/>
</dbReference>
<dbReference type="Gene3D" id="3.65.10.10">
    <property type="entry name" value="Enolpyruvate transferase domain"/>
    <property type="match status" value="2"/>
</dbReference>
<dbReference type="HAMAP" id="MF_00111">
    <property type="entry name" value="MurA"/>
    <property type="match status" value="1"/>
</dbReference>
<dbReference type="InterPro" id="IPR001986">
    <property type="entry name" value="Enolpyruvate_Tfrase_dom"/>
</dbReference>
<dbReference type="InterPro" id="IPR036968">
    <property type="entry name" value="Enolpyruvate_Tfrase_sf"/>
</dbReference>
<dbReference type="InterPro" id="IPR050068">
    <property type="entry name" value="MurA_subfamily"/>
</dbReference>
<dbReference type="InterPro" id="IPR013792">
    <property type="entry name" value="RNA3'P_cycl/enolpyr_Trfase_a/b"/>
</dbReference>
<dbReference type="InterPro" id="IPR005750">
    <property type="entry name" value="UDP_GlcNAc_COvinyl_MurA"/>
</dbReference>
<dbReference type="NCBIfam" id="TIGR01072">
    <property type="entry name" value="murA"/>
    <property type="match status" value="1"/>
</dbReference>
<dbReference type="NCBIfam" id="NF006873">
    <property type="entry name" value="PRK09369.1"/>
    <property type="match status" value="1"/>
</dbReference>
<dbReference type="PANTHER" id="PTHR43783">
    <property type="entry name" value="UDP-N-ACETYLGLUCOSAMINE 1-CARBOXYVINYLTRANSFERASE"/>
    <property type="match status" value="1"/>
</dbReference>
<dbReference type="PANTHER" id="PTHR43783:SF1">
    <property type="entry name" value="UDP-N-ACETYLGLUCOSAMINE 1-CARBOXYVINYLTRANSFERASE"/>
    <property type="match status" value="1"/>
</dbReference>
<dbReference type="Pfam" id="PF00275">
    <property type="entry name" value="EPSP_synthase"/>
    <property type="match status" value="1"/>
</dbReference>
<dbReference type="SUPFAM" id="SSF55205">
    <property type="entry name" value="EPT/RTPC-like"/>
    <property type="match status" value="1"/>
</dbReference>
<comment type="function">
    <text evidence="1">Cell wall formation. Adds enolpyruvyl to UDP-N-acetylglucosamine.</text>
</comment>
<comment type="catalytic activity">
    <reaction evidence="1">
        <text>phosphoenolpyruvate + UDP-N-acetyl-alpha-D-glucosamine = UDP-N-acetyl-3-O-(1-carboxyvinyl)-alpha-D-glucosamine + phosphate</text>
        <dbReference type="Rhea" id="RHEA:18681"/>
        <dbReference type="ChEBI" id="CHEBI:43474"/>
        <dbReference type="ChEBI" id="CHEBI:57705"/>
        <dbReference type="ChEBI" id="CHEBI:58702"/>
        <dbReference type="ChEBI" id="CHEBI:68483"/>
        <dbReference type="EC" id="2.5.1.7"/>
    </reaction>
</comment>
<comment type="pathway">
    <text evidence="1">Cell wall biogenesis; peptidoglycan biosynthesis.</text>
</comment>
<comment type="subcellular location">
    <subcellularLocation>
        <location evidence="1">Cytoplasm</location>
    </subcellularLocation>
</comment>
<comment type="similarity">
    <text evidence="1">Belongs to the EPSP synthase family. MurA subfamily.</text>
</comment>
<accession>Q5WYX3</accession>
<name>MURA1_LEGPL</name>
<protein>
    <recommendedName>
        <fullName evidence="1">UDP-N-acetylglucosamine 1-carboxyvinyltransferase 1</fullName>
        <ecNumber evidence="1">2.5.1.7</ecNumber>
    </recommendedName>
    <alternativeName>
        <fullName evidence="1">Enoylpyruvate transferase 1</fullName>
    </alternativeName>
    <alternativeName>
        <fullName evidence="1">UDP-N-acetylglucosamine enolpyruvyl transferase 1</fullName>
        <shortName evidence="1">EPT 1</shortName>
    </alternativeName>
</protein>
<organism>
    <name type="scientific">Legionella pneumophila (strain Lens)</name>
    <dbReference type="NCBI Taxonomy" id="297245"/>
    <lineage>
        <taxon>Bacteria</taxon>
        <taxon>Pseudomonadati</taxon>
        <taxon>Pseudomonadota</taxon>
        <taxon>Gammaproteobacteria</taxon>
        <taxon>Legionellales</taxon>
        <taxon>Legionellaceae</taxon>
        <taxon>Legionella</taxon>
    </lineage>
</organism>
<keyword id="KW-0131">Cell cycle</keyword>
<keyword id="KW-0132">Cell division</keyword>
<keyword id="KW-0133">Cell shape</keyword>
<keyword id="KW-0961">Cell wall biogenesis/degradation</keyword>
<keyword id="KW-0963">Cytoplasm</keyword>
<keyword id="KW-0573">Peptidoglycan synthesis</keyword>
<keyword id="KW-0670">Pyruvate</keyword>
<keyword id="KW-0808">Transferase</keyword>
<reference key="1">
    <citation type="journal article" date="2004" name="Nat. Genet.">
        <title>Evidence in the Legionella pneumophila genome for exploitation of host cell functions and high genome plasticity.</title>
        <authorList>
            <person name="Cazalet C."/>
            <person name="Rusniok C."/>
            <person name="Brueggemann H."/>
            <person name="Zidane N."/>
            <person name="Magnier A."/>
            <person name="Ma L."/>
            <person name="Tichit M."/>
            <person name="Jarraud S."/>
            <person name="Bouchier C."/>
            <person name="Vandenesch F."/>
            <person name="Kunst F."/>
            <person name="Etienne J."/>
            <person name="Glaser P."/>
            <person name="Buchrieser C."/>
        </authorList>
    </citation>
    <scope>NUCLEOTIDE SEQUENCE [LARGE SCALE GENOMIC DNA]</scope>
    <source>
        <strain>Lens</strain>
    </source>
</reference>